<reference key="1">
    <citation type="journal article" date="2008" name="Chem. Biol. Interact.">
        <title>Extending the Bacillus cereus group genomics to putative food-borne pathogens of different toxicity.</title>
        <authorList>
            <person name="Lapidus A."/>
            <person name="Goltsman E."/>
            <person name="Auger S."/>
            <person name="Galleron N."/>
            <person name="Segurens B."/>
            <person name="Dossat C."/>
            <person name="Land M.L."/>
            <person name="Broussolle V."/>
            <person name="Brillard J."/>
            <person name="Guinebretiere M.-H."/>
            <person name="Sanchis V."/>
            <person name="Nguen-the C."/>
            <person name="Lereclus D."/>
            <person name="Richardson P."/>
            <person name="Wincker P."/>
            <person name="Weissenbach J."/>
            <person name="Ehrlich S.D."/>
            <person name="Sorokin A."/>
        </authorList>
    </citation>
    <scope>NUCLEOTIDE SEQUENCE [LARGE SCALE GENOMIC DNA]</scope>
    <source>
        <strain>KBAB4</strain>
    </source>
</reference>
<protein>
    <recommendedName>
        <fullName evidence="1">N-acetylmuramic acid 6-phosphate etherase</fullName>
        <shortName evidence="1">MurNAc-6-P etherase</shortName>
        <ecNumber evidence="1">4.2.1.126</ecNumber>
    </recommendedName>
    <alternativeName>
        <fullName evidence="1">N-acetylmuramic acid 6-phosphate hydrolase</fullName>
    </alternativeName>
    <alternativeName>
        <fullName evidence="1">N-acetylmuramic acid 6-phosphate lyase</fullName>
    </alternativeName>
</protein>
<keyword id="KW-0119">Carbohydrate metabolism</keyword>
<keyword id="KW-0456">Lyase</keyword>
<name>MURQ_BACMK</name>
<comment type="function">
    <text evidence="1">Specifically catalyzes the cleavage of the D-lactyl ether substituent of MurNAc 6-phosphate, producing GlcNAc 6-phosphate and D-lactate.</text>
</comment>
<comment type="catalytic activity">
    <reaction evidence="1">
        <text>N-acetyl-D-muramate 6-phosphate + H2O = N-acetyl-D-glucosamine 6-phosphate + (R)-lactate</text>
        <dbReference type="Rhea" id="RHEA:26410"/>
        <dbReference type="ChEBI" id="CHEBI:15377"/>
        <dbReference type="ChEBI" id="CHEBI:16004"/>
        <dbReference type="ChEBI" id="CHEBI:57513"/>
        <dbReference type="ChEBI" id="CHEBI:58722"/>
        <dbReference type="EC" id="4.2.1.126"/>
    </reaction>
</comment>
<comment type="pathway">
    <text evidence="1">Amino-sugar metabolism; N-acetylmuramate degradation.</text>
</comment>
<comment type="subunit">
    <text evidence="1">Homodimer.</text>
</comment>
<comment type="miscellaneous">
    <text evidence="1">A lyase-type mechanism (elimination/hydration) is suggested for the cleavage of the lactyl ether bond of MurNAc 6-phosphate, with the formation of an alpha,beta-unsaturated aldehyde intermediate with (E)-stereochemistry, followed by the syn addition of water to give product.</text>
</comment>
<comment type="similarity">
    <text evidence="1">Belongs to the GCKR-like family. MurNAc-6-P etherase subfamily.</text>
</comment>
<gene>
    <name evidence="1" type="primary">murQ</name>
    <name type="ordered locus">BcerKBAB4_0732</name>
</gene>
<dbReference type="EC" id="4.2.1.126" evidence="1"/>
<dbReference type="EMBL" id="CP000903">
    <property type="protein sequence ID" value="ABY41993.1"/>
    <property type="molecule type" value="Genomic_DNA"/>
</dbReference>
<dbReference type="RefSeq" id="WP_002166328.1">
    <property type="nucleotide sequence ID" value="NC_010184.1"/>
</dbReference>
<dbReference type="SMR" id="A9VGE7"/>
<dbReference type="KEGG" id="bwe:BcerKBAB4_0732"/>
<dbReference type="eggNOG" id="COG2103">
    <property type="taxonomic scope" value="Bacteria"/>
</dbReference>
<dbReference type="HOGENOM" id="CLU_049049_1_1_9"/>
<dbReference type="UniPathway" id="UPA00342"/>
<dbReference type="Proteomes" id="UP000002154">
    <property type="component" value="Chromosome"/>
</dbReference>
<dbReference type="GO" id="GO:0097367">
    <property type="term" value="F:carbohydrate derivative binding"/>
    <property type="evidence" value="ECO:0007669"/>
    <property type="project" value="InterPro"/>
</dbReference>
<dbReference type="GO" id="GO:0016835">
    <property type="term" value="F:carbon-oxygen lyase activity"/>
    <property type="evidence" value="ECO:0007669"/>
    <property type="project" value="UniProtKB-UniRule"/>
</dbReference>
<dbReference type="GO" id="GO:0016803">
    <property type="term" value="F:ether hydrolase activity"/>
    <property type="evidence" value="ECO:0007669"/>
    <property type="project" value="TreeGrafter"/>
</dbReference>
<dbReference type="GO" id="GO:0046348">
    <property type="term" value="P:amino sugar catabolic process"/>
    <property type="evidence" value="ECO:0007669"/>
    <property type="project" value="InterPro"/>
</dbReference>
<dbReference type="GO" id="GO:0097173">
    <property type="term" value="P:N-acetylmuramic acid catabolic process"/>
    <property type="evidence" value="ECO:0007669"/>
    <property type="project" value="UniProtKB-UniPathway"/>
</dbReference>
<dbReference type="GO" id="GO:0009254">
    <property type="term" value="P:peptidoglycan turnover"/>
    <property type="evidence" value="ECO:0007669"/>
    <property type="project" value="TreeGrafter"/>
</dbReference>
<dbReference type="CDD" id="cd05007">
    <property type="entry name" value="SIS_Etherase"/>
    <property type="match status" value="1"/>
</dbReference>
<dbReference type="FunFam" id="1.10.8.1080:FF:000001">
    <property type="entry name" value="N-acetylmuramic acid 6-phosphate etherase"/>
    <property type="match status" value="1"/>
</dbReference>
<dbReference type="FunFam" id="3.40.50.10490:FF:000014">
    <property type="entry name" value="N-acetylmuramic acid 6-phosphate etherase"/>
    <property type="match status" value="1"/>
</dbReference>
<dbReference type="Gene3D" id="1.10.8.1080">
    <property type="match status" value="1"/>
</dbReference>
<dbReference type="Gene3D" id="3.40.50.10490">
    <property type="entry name" value="Glucose-6-phosphate isomerase like protein, domain 1"/>
    <property type="match status" value="1"/>
</dbReference>
<dbReference type="HAMAP" id="MF_00068">
    <property type="entry name" value="MurQ"/>
    <property type="match status" value="1"/>
</dbReference>
<dbReference type="InterPro" id="IPR005488">
    <property type="entry name" value="Etherase_MurQ"/>
</dbReference>
<dbReference type="InterPro" id="IPR005486">
    <property type="entry name" value="Glucokinase_regulatory_CS"/>
</dbReference>
<dbReference type="InterPro" id="IPR040190">
    <property type="entry name" value="MURQ/GCKR"/>
</dbReference>
<dbReference type="InterPro" id="IPR001347">
    <property type="entry name" value="SIS_dom"/>
</dbReference>
<dbReference type="InterPro" id="IPR046348">
    <property type="entry name" value="SIS_dom_sf"/>
</dbReference>
<dbReference type="NCBIfam" id="TIGR00274">
    <property type="entry name" value="N-acetylmuramic acid 6-phosphate etherase"/>
    <property type="match status" value="1"/>
</dbReference>
<dbReference type="NCBIfam" id="NF003915">
    <property type="entry name" value="PRK05441.1"/>
    <property type="match status" value="1"/>
</dbReference>
<dbReference type="NCBIfam" id="NF009222">
    <property type="entry name" value="PRK12570.1"/>
    <property type="match status" value="1"/>
</dbReference>
<dbReference type="PANTHER" id="PTHR10088">
    <property type="entry name" value="GLUCOKINASE REGULATORY PROTEIN"/>
    <property type="match status" value="1"/>
</dbReference>
<dbReference type="PANTHER" id="PTHR10088:SF4">
    <property type="entry name" value="GLUCOKINASE REGULATORY PROTEIN"/>
    <property type="match status" value="1"/>
</dbReference>
<dbReference type="Pfam" id="PF22645">
    <property type="entry name" value="GKRP_SIS_N"/>
    <property type="match status" value="1"/>
</dbReference>
<dbReference type="SUPFAM" id="SSF53697">
    <property type="entry name" value="SIS domain"/>
    <property type="match status" value="1"/>
</dbReference>
<dbReference type="PROSITE" id="PS01272">
    <property type="entry name" value="GCKR"/>
    <property type="match status" value="1"/>
</dbReference>
<dbReference type="PROSITE" id="PS51464">
    <property type="entry name" value="SIS"/>
    <property type="match status" value="1"/>
</dbReference>
<proteinExistence type="inferred from homology"/>
<organism>
    <name type="scientific">Bacillus mycoides (strain KBAB4)</name>
    <name type="common">Bacillus weihenstephanensis</name>
    <dbReference type="NCBI Taxonomy" id="315730"/>
    <lineage>
        <taxon>Bacteria</taxon>
        <taxon>Bacillati</taxon>
        <taxon>Bacillota</taxon>
        <taxon>Bacilli</taxon>
        <taxon>Bacillales</taxon>
        <taxon>Bacillaceae</taxon>
        <taxon>Bacillus</taxon>
        <taxon>Bacillus cereus group</taxon>
    </lineage>
</organism>
<sequence>MLENLSTEHRNEKTMNLDEMSIKEVLQSMNEEDRTVALAVENEIEEIEKVVQIVTKSFEEEGRLIYIGAGTSGRLGILDAVECPPTFGTDDNMVQGFIAGGLKAFTKAVEGAEDREELAKEDLKSIGLNEKDTVIGIAASGRTPYVIGGLKYASSVGASTASISCNKNAEISKYAKLNVEVETGAEILTGSTRLKAGTAQKLVLNMISTASMIGVGKVYKNLMVDVQSTNEKLVERSKRIIVEATGASYEVATECYEKADRNVKAAIVMILLQCEYGEALEKLKGAKGFVKKAL</sequence>
<feature type="chain" id="PRO_1000092301" description="N-acetylmuramic acid 6-phosphate etherase">
    <location>
        <begin position="1"/>
        <end position="294"/>
    </location>
</feature>
<feature type="domain" description="SIS" evidence="1">
    <location>
        <begin position="54"/>
        <end position="217"/>
    </location>
</feature>
<feature type="active site" description="Proton donor" evidence="1">
    <location>
        <position position="82"/>
    </location>
</feature>
<feature type="active site" evidence="1">
    <location>
        <position position="113"/>
    </location>
</feature>
<accession>A9VGE7</accession>
<evidence type="ECO:0000255" key="1">
    <source>
        <dbReference type="HAMAP-Rule" id="MF_00068"/>
    </source>
</evidence>